<comment type="function">
    <text evidence="1 2 5 6 7 8 9 10 11 12 13 14 15 16 17 18 19 20 21 23 24 25 26">Functions in regulating agonist-mediated G-protein coupled receptor (GPCR) signaling by mediating both receptor desensitization and resensitization processes. During homologous desensitization, beta-arrestins bind to the GPRK-phosphorylated receptor and sterically preclude its coupling to the cognate G-protein; the binding appears to require additional receptor determinants exposed only in the active receptor conformation. The beta-arrestins target many receptors for internalization by acting as endocytic adapters (CLASPs, clathrin-associated sorting proteins) and recruiting the GPRCs to the adapter protein 2 complex 2 (AP-2) in clathrin-coated pits (CCPs). However, the extent of beta-arrestin involvement appears to vary significantly depending on the receptor, agonist and cell type. Internalized arrestin-receptor complexes traffic to intracellular endosomes, where they remain uncoupled from G-proteins. Two different modes of arrestin-mediated internalization occur. Class A receptors, like ADRB2, OPRM1, ENDRA, D1AR and ADRA1B dissociate from beta-arrestin at or near the plasma membrane and undergo rapid recycling. Class B receptors, like AVPR2, AGTR1, NTSR1, TRHR and TACR1 internalize as a complex with arrestin and traffic with it to endosomal vesicles, presumably as desensitized receptors, for extended periods of time. Receptor resensitization then requires that receptor-bound arrestin is removed so that the receptor can be dephosphorylated and returned to the plasma membrane. Involved in internalization of P2RY4 and UTP-stimulated internalization of P2RY2. Involved in phosphorylation-dependent internalization of OPRD1 ands subsequent recycling. Involved in the degradation of cAMP by recruiting cAMP phosphodiesterases to ligand-activated receptors. Beta-arrestins function as multivalent adapter proteins that can switch the GPCR from a G-protein signaling mode that transmits short-lived signals from the plasma membrane via small molecule second messengers and ion channels to a beta-arrestin signaling mode that transmits a distinct set of signals that are initiated as the receptor internalizes and transits the intracellular compartment. Acts as a signaling scaffold for MAPK pathways such as MAPK1/3 (ERK1/2). ERK1/2 activated by the beta-arrestin scaffold is largely excluded from the nucleus and confined to cytoplasmic locations such as endocytic vesicles, also called beta-arrestin signalosomes. Recruits c-Src/SRC to ADRB2 resulting in ERK activation. GPCRs for which the beta-arrestin-mediated signaling relies on both ARRB1 and ARRB2 (codependent regulation) include ADRB2, F2RL1 and PTH1R. For some GPCRs the beta-arrestin-mediated signaling relies on either ARRB1 or ARRB2 and is inhibited by the other respective beta-arrestin form (reciprocal regulation). Inhibits ERK1/2 signaling in AGTR1- and AVPR2-mediated activation (reciprocal regulation). Is required for SP-stimulated endocytosis of NK1R and recruits c-Src/SRC to internalized NK1R resulting in ERK1/2 activation, which is required for the antiapoptotic effects of SP. Is involved in proteinase-activated F2RL1-mediated ERK activity. Acts as a signaling scaffold for the AKT1 pathway. Is involved in alpha-thrombin-stimulated AKT1 signaling. Is involved in IGF1-stimulated AKT1 signaling leading to increased protection from apoptosis. Involved in activation of the p38 MAPK signaling pathway and in actin bundle formation. Involved in F2RL1-mediated cytoskeletal rearrangement and chemotaxis. Involved in AGTR1-mediated stress fiber formation by acting together with GNAQ to activate RHOA. Appears to function as signaling scaffold involved in regulation of MIP-1-beta-stimulated CCR5-dependent chemotaxis. Involved in attenuation of NF-kappa-B-dependent transcription in response to GPCR or cytokine stimulation by interacting with and stabilizing CHUK. May serve as nuclear messenger for GPCRs. Involved in OPRD1-stimulated transcriptional regulation by translocating to CDKN1B and FOS promoter regions and recruiting EP300 resulting in acetylation of histone H4. Involved in regulation of LEF1 transcriptional activity via interaction with DVL1 and/or DVL2 Also involved in regulation of receptors other than GPCRs. Involved in Toll-like receptor and IL-1 receptor signaling through the interaction with TRAF6 which prevents TRAF6 autoubiquitination and oligomerization required for activation of NF-kappa-B and JUN. Binds phosphoinositides. Binds inositolhexakisphosphate (InsP6) (By similarity). Involved in IL8-mediated granule release in neutrophils. Required for atypical chemokine receptor ACKR2-induced RAC1-LIMK1-PAK1-dependent phosphorylation of cofilin (CFL1) and for the up-regulation of ACKR2 from endosomal compartment to cell membrane, increasing its efficiency in chemokine uptake and degradation. Involved in the internalization of the atypical chemokine receptor ACKR3 (By similarity). Negatively regulates the NOTCH signaling pathway by mediating the ubiquitination and degradation of NOTCH1 by ITCH. Participates in the recruitment of the ubiquitin-protein ligase to the receptor (By similarity).</text>
</comment>
<comment type="subunit">
    <text evidence="2 22">Monomer. Homodimer. Homooligomer; the self-association is mediated by InsP6-binding. Heterooligomer with ARRB2; the association is mediated by InsP6-binding. Interacts with ADRB2 (phosphorylated). Interacts with CHRM2 (phosphorylated). Interacts with LHCGR. Interacts with CYTH2 and CASR. Interacts with AP2B1 (dephosphorylated at 'Tyr-737'); phosphorylation of AP2B1 at 'Tyr-737' disrupts the interaction. Interacts (dephosphorylated at Ser-412) with CLTC. Interacts with CCR2 and GRK2. Interacts with CRR5. Interacts with PTAFR (phosphorylated on serine residues). Interacts with CLTC and MAP2K3. Interacts with CREB1. Interacts with TRAF6. Interacts with IGF1R and MDM2. Interacts with C5AR1. Interacts with PDE4D. Interacts with SRC (via the SH3 domain and the protein kinase domain); the interaction is independent of the phosphorylation state of SRC C-terminus. Interacts with TACR1. Interacts with RAF1. Interacts with CHUK, IKBKB and MAP3K14. Interacts with DVL1; the interaction is enhanced by phosphorylation of DVL1. Interacts with DVL2; the interaction is enhanced by phosphorylation of DVL2. Interacts with IGF1R. Associates with MAP kinase p38. Part of a MAPK signaling complex consisting of TACR1, ARRB1, SRC, MAPK1 (activated) and MAPK3 (activated). Part of a MAPK signaling complex consisting of F2RL1, ARRB1, RAF1, MAPK1 (activated) and MAPK3 (activated). Interacts with GPR143 (By similarity). Interacts with MAP2K4/MKK4 (By similarity). Interacts with HCK and CXCR1 (phosphorylated). Interacts with ACKR3 and ACKR4 (By similarity). Interacts with ARRDC1; the interaction is direct (PubMed:23886940). Interacts with GPR61, GPR62 and GPR135 (By similarity).</text>
</comment>
<comment type="interaction">
    <interactant intactId="EBI-4303019">
        <id>P29066</id>
    </interactant>
    <interactant intactId="EBI-931534">
        <id>P11345</id>
        <label>Raf1</label>
    </interactant>
    <organismsDiffer>false</organismsDiffer>
    <experiments>5</experiments>
</comment>
<comment type="interaction">
    <interactant intactId="EBI-4303019">
        <id>P29066</id>
    </interactant>
    <interactant intactId="EBI-4303189">
        <id>P55085</id>
        <label>F2RL1</label>
    </interactant>
    <organismsDiffer>true</organismsDiffer>
    <experiments>6</experiments>
</comment>
<comment type="interaction">
    <interactant intactId="EBI-4303019">
        <id>P29066</id>
    </interactant>
    <interactant intactId="EBI-444403">
        <id>P53667</id>
        <label>LIMK1</label>
    </interactant>
    <organismsDiffer>true</organismsDiffer>
    <experiments>2</experiments>
</comment>
<comment type="interaction">
    <interactant intactId="EBI-4303019">
        <id>P29066</id>
    </interactant>
    <interactant intactId="EBI-4303060">
        <id>Q96GD0</id>
        <label>PDXP</label>
    </interactant>
    <organismsDiffer>true</organismsDiffer>
    <experiments>2</experiments>
</comment>
<comment type="interaction">
    <interactant intactId="EBI-4303019">
        <id>P29066</id>
    </interactant>
    <interactant intactId="EBI-366083">
        <id>P04637</id>
        <label>TP53</label>
    </interactant>
    <organismsDiffer>true</organismsDiffer>
    <experiments>3</experiments>
</comment>
<comment type="subcellular location">
    <subcellularLocation>
        <location>Cytoplasm</location>
    </subcellularLocation>
    <subcellularLocation>
        <location>Nucleus</location>
    </subcellularLocation>
    <subcellularLocation>
        <location>Cell membrane</location>
    </subcellularLocation>
    <subcellularLocation>
        <location evidence="27">Membrane</location>
        <location evidence="27">Clathrin-coated pit</location>
    </subcellularLocation>
    <subcellularLocation>
        <location>Cell projection</location>
        <location>Pseudopodium</location>
    </subcellularLocation>
    <subcellularLocation>
        <location>Cytoplasmic vesicle</location>
    </subcellularLocation>
    <text evidence="1">Translocates to the plasma membrane and colocalizes with antagonist-stimulated GPCRs. The monomeric form is predominantly located in the nucleus. The oligomeric form is located in the cytoplasm. Translocates to the nucleus upon stimulation of OPRD1 (By similarity).</text>
</comment>
<comment type="tissue specificity">
    <text>Predominantly localized in neuronal tissues and in the spleen.</text>
</comment>
<comment type="domain">
    <text evidence="1">The [DE]-X(1,2)-F-X-X-[FL]-X-X-X-R motif mediates interaction the AP-2 complex subunit AP2B1. Binding to phosphorylated GPCRs induces a conformationanl change that exposes the motif to the surface (By similarity).</text>
</comment>
<comment type="domain">
    <text>The N-terminus binds InsP6 with low affinity.</text>
</comment>
<comment type="domain">
    <text>The C-terminus binds InsP6 with high affinity.</text>
</comment>
<comment type="PTM">
    <text evidence="24">Constitutively phosphorylated at Ser-412 in the cytoplasm. At the plasma membrane, is rapidly dephosphorylated, a process that is required for clathrin binding and beta-2 adrenergic receptor/ADRB2 endocytosis but not for ADRB2 binding and desensitization. Once internalized, is rephosphorylated.</text>
</comment>
<comment type="PTM">
    <text evidence="1">The ubiquitination status appears to regulate the formation and trafficking of beta-arrestin-GPCR complexes and signaling. Ubiquitination appears to occur GPCR-specific. Ubiquitinated by MDM2; the ubiquitination is required for rapid internalization of ADRB2. Deubiquitinated by USP33; the deubiquitination leads to a dissociation of the beta-arrestin-GPCR complex. Stimulation of a class A GPCR, such as ADRB2, induces transient ubiquitination and subsequently promotes association with USP33 (By similarity).</text>
</comment>
<comment type="similarity">
    <text evidence="27">Belongs to the arrestin family.</text>
</comment>
<protein>
    <recommendedName>
        <fullName>Beta-arrestin-1</fullName>
    </recommendedName>
    <alternativeName>
        <fullName>Arrestin beta-1</fullName>
    </alternativeName>
</protein>
<organism>
    <name type="scientific">Rattus norvegicus</name>
    <name type="common">Rat</name>
    <dbReference type="NCBI Taxonomy" id="10116"/>
    <lineage>
        <taxon>Eukaryota</taxon>
        <taxon>Metazoa</taxon>
        <taxon>Chordata</taxon>
        <taxon>Craniata</taxon>
        <taxon>Vertebrata</taxon>
        <taxon>Euteleostomi</taxon>
        <taxon>Mammalia</taxon>
        <taxon>Eutheria</taxon>
        <taxon>Euarchontoglires</taxon>
        <taxon>Glires</taxon>
        <taxon>Rodentia</taxon>
        <taxon>Myomorpha</taxon>
        <taxon>Muroidea</taxon>
        <taxon>Muridae</taxon>
        <taxon>Murinae</taxon>
        <taxon>Rattus</taxon>
    </lineage>
</organism>
<evidence type="ECO:0000250" key="1"/>
<evidence type="ECO:0000250" key="2">
    <source>
        <dbReference type="UniProtKB" id="P49407"/>
    </source>
</evidence>
<evidence type="ECO:0000250" key="3">
    <source>
        <dbReference type="UniProtKB" id="Q8BWG8"/>
    </source>
</evidence>
<evidence type="ECO:0000256" key="4">
    <source>
        <dbReference type="SAM" id="MobiDB-lite"/>
    </source>
</evidence>
<evidence type="ECO:0000269" key="5">
    <source>
    </source>
</evidence>
<evidence type="ECO:0000269" key="6">
    <source>
    </source>
</evidence>
<evidence type="ECO:0000269" key="7">
    <source>
    </source>
</evidence>
<evidence type="ECO:0000269" key="8">
    <source>
    </source>
</evidence>
<evidence type="ECO:0000269" key="9">
    <source>
    </source>
</evidence>
<evidence type="ECO:0000269" key="10">
    <source>
    </source>
</evidence>
<evidence type="ECO:0000269" key="11">
    <source>
    </source>
</evidence>
<evidence type="ECO:0000269" key="12">
    <source>
    </source>
</evidence>
<evidence type="ECO:0000269" key="13">
    <source>
    </source>
</evidence>
<evidence type="ECO:0000269" key="14">
    <source>
    </source>
</evidence>
<evidence type="ECO:0000269" key="15">
    <source>
    </source>
</evidence>
<evidence type="ECO:0000269" key="16">
    <source>
    </source>
</evidence>
<evidence type="ECO:0000269" key="17">
    <source>
    </source>
</evidence>
<evidence type="ECO:0000269" key="18">
    <source>
    </source>
</evidence>
<evidence type="ECO:0000269" key="19">
    <source>
    </source>
</evidence>
<evidence type="ECO:0000269" key="20">
    <source>
    </source>
</evidence>
<evidence type="ECO:0000269" key="21">
    <source>
    </source>
</evidence>
<evidence type="ECO:0000269" key="22">
    <source>
    </source>
</evidence>
<evidence type="ECO:0000269" key="23">
    <source>
    </source>
</evidence>
<evidence type="ECO:0000269" key="24">
    <source>
    </source>
</evidence>
<evidence type="ECO:0000269" key="25">
    <source>
    </source>
</evidence>
<evidence type="ECO:0000269" key="26">
    <source>
    </source>
</evidence>
<evidence type="ECO:0000305" key="27"/>
<evidence type="ECO:0000312" key="28">
    <source>
        <dbReference type="RGD" id="2156"/>
    </source>
</evidence>
<evidence type="ECO:0007744" key="29">
    <source>
    </source>
</evidence>
<evidence type="ECO:0007744" key="30">
    <source>
    </source>
</evidence>
<evidence type="ECO:0007829" key="31">
    <source>
        <dbReference type="PDB" id="4JQI"/>
    </source>
</evidence>
<evidence type="ECO:0007829" key="32">
    <source>
        <dbReference type="PDB" id="6KL7"/>
    </source>
</evidence>
<evidence type="ECO:0007829" key="33">
    <source>
        <dbReference type="PDB" id="8HST"/>
    </source>
</evidence>
<evidence type="ECO:0007829" key="34">
    <source>
        <dbReference type="PDB" id="8HSV"/>
    </source>
</evidence>
<evidence type="ECO:0007829" key="35">
    <source>
        <dbReference type="PDB" id="8I0N"/>
    </source>
</evidence>
<evidence type="ECO:0007829" key="36">
    <source>
        <dbReference type="PDB" id="8J8Z"/>
    </source>
</evidence>
<evidence type="ECO:0007829" key="37">
    <source>
        <dbReference type="PDB" id="9BT8"/>
    </source>
</evidence>
<evidence type="ECO:0007829" key="38">
    <source>
        <dbReference type="PDB" id="9CX9"/>
    </source>
</evidence>
<sequence length="418" mass="47020">MGDKGTRVFKKASPNGKLTVYLGKRDFVDHIDLVDPVDGVVLVDPEYLKERRVYVTLTCAFRYGREDLDVLGLTFRKDLFVANVQSFPPAPEDKKPLTRLQERLIKKLGEHAYPFTFEIPPNLPCSVTLQPGPEDTGKACGVDYEVKAFCAENLEEKIHKRNSVRLVIRKVQYAPERPGPQPTAETTRQFLMSDKPLHLEASLDKEIYYHGEPISVNVHVTNNTNKTVKKIKISVRQYADICLFNTAQYKCPVAMEEADDTVAPSSTFCKVYTLTPFLANNREKRGLALDGKLKHEDTNLASSTLLREGANREILGIIVSYKVKVKLVVSRGGLLGDLASSDVAVELPFTLMHPKPKEEPPHREVPESETPVDTNLIELDTNDDDIVFEDFARQRLKGMKDDKDEEDDGTGSPHLNNR</sequence>
<feature type="chain" id="PRO_0000205197" description="Beta-arrestin-1">
    <location>
        <begin position="1"/>
        <end position="418"/>
    </location>
</feature>
<feature type="region of interest" description="Interaction with SRC">
    <location>
        <begin position="1"/>
        <end position="163"/>
    </location>
</feature>
<feature type="region of interest" description="Interaction with CHRM2" evidence="1">
    <location>
        <begin position="45"/>
        <end position="86"/>
    </location>
</feature>
<feature type="region of interest" description="Interaction with TRAF6" evidence="1">
    <location>
        <begin position="318"/>
        <end position="418"/>
    </location>
</feature>
<feature type="region of interest" description="Disordered" evidence="4">
    <location>
        <begin position="353"/>
        <end position="374"/>
    </location>
</feature>
<feature type="region of interest" description="Disordered" evidence="4">
    <location>
        <begin position="397"/>
        <end position="418"/>
    </location>
</feature>
<feature type="compositionally biased region" description="Basic and acidic residues" evidence="4">
    <location>
        <begin position="355"/>
        <end position="366"/>
    </location>
</feature>
<feature type="binding site" evidence="1">
    <location>
        <position position="250"/>
    </location>
    <ligand>
        <name>1D-myo-inositol hexakisphosphate</name>
        <dbReference type="ChEBI" id="CHEBI:58130"/>
    </ligand>
</feature>
<feature type="binding site" evidence="1">
    <location>
        <position position="255"/>
    </location>
    <ligand>
        <name>1D-myo-inositol hexakisphosphate</name>
        <dbReference type="ChEBI" id="CHEBI:58130"/>
    </ligand>
</feature>
<feature type="binding site" evidence="1">
    <location>
        <position position="324"/>
    </location>
    <ligand>
        <name>1D-myo-inositol hexakisphosphate</name>
        <dbReference type="ChEBI" id="CHEBI:58130"/>
    </ligand>
</feature>
<feature type="binding site" evidence="1">
    <location>
        <position position="326"/>
    </location>
    <ligand>
        <name>1D-myo-inositol hexakisphosphate</name>
        <dbReference type="ChEBI" id="CHEBI:58130"/>
    </ligand>
</feature>
<feature type="modified residue" description="Phosphotyrosine" evidence="3">
    <location>
        <position position="47"/>
    </location>
</feature>
<feature type="modified residue" description="Phosphoserine" evidence="24 29 30">
    <location>
        <position position="412"/>
    </location>
</feature>
<feature type="modified residue" description="Phosphoserine; by GRK5" evidence="1">
    <location>
        <position position="412"/>
    </location>
</feature>
<feature type="mutagenesis site" description="Inhibits internalization of EDNRA, EDNRB and ADRB2. No effect on interaction with SRC; impairs ADRB2- and HTR1A-mediated ERK phosphorylation; impairs sequestration of ADRB2." evidence="8 23 26">
    <original>V</original>
    <variation>D</variation>
    <location>
        <position position="53"/>
    </location>
</feature>
<feature type="mutagenesis site" description="Impairs interaction with SRC; impairs ADRB2- and HTR1A-mediated ERK phosphorylation; no effect on sequestration of ADRB2; when associated with E-121." evidence="26">
    <original>P</original>
    <variation>G</variation>
    <location>
        <position position="91"/>
    </location>
</feature>
<feature type="mutagenesis site" description="Impairs interaction with SRC; impairs ADRB2- and HTR1A-mediated ERK phosphorylation; no effect on sequestration of ADRB2; when associated with G-91." evidence="26">
    <original>P</original>
    <variation>E</variation>
    <location>
        <position position="121"/>
    </location>
</feature>
<feature type="mutagenesis site" description="Abolishes phosphorylation and inhibits ADRB2 endocytosis; no effect on interaction with ADRB2." evidence="24 25 26">
    <original>S</original>
    <variation>A</variation>
    <location>
        <position position="412"/>
    </location>
</feature>
<feature type="mutagenesis site" description="Impairs interaction with SRC; impairs ADRB2-mediated ERK phosphorylation and IGFR1-mediated MAP kinase phosphorylation of GAB1; impairs sequestration of ADRB2 and IGFR1; abolishes interaction with clathrin; no effect on interaction with ADRB2 and IGFR1." evidence="24 25 26">
    <original>S</original>
    <variation>D</variation>
    <location>
        <position position="412"/>
    </location>
</feature>
<feature type="strand" evidence="31">
    <location>
        <begin position="7"/>
        <end position="12"/>
    </location>
</feature>
<feature type="strand" evidence="31">
    <location>
        <begin position="16"/>
        <end position="23"/>
    </location>
</feature>
<feature type="strand" evidence="31">
    <location>
        <begin position="25"/>
        <end position="29"/>
    </location>
</feature>
<feature type="strand" evidence="31">
    <location>
        <begin position="37"/>
        <end position="43"/>
    </location>
</feature>
<feature type="turn" evidence="31">
    <location>
        <begin position="45"/>
        <end position="47"/>
    </location>
</feature>
<feature type="turn" evidence="33">
    <location>
        <begin position="48"/>
        <end position="50"/>
    </location>
</feature>
<feature type="strand" evidence="31">
    <location>
        <begin position="53"/>
        <end position="63"/>
    </location>
</feature>
<feature type="turn" evidence="34">
    <location>
        <begin position="70"/>
        <end position="72"/>
    </location>
</feature>
<feature type="strand" evidence="31">
    <location>
        <begin position="73"/>
        <end position="87"/>
    </location>
</feature>
<feature type="helix" evidence="31">
    <location>
        <begin position="99"/>
        <end position="108"/>
    </location>
</feature>
<feature type="strand" evidence="31">
    <location>
        <begin position="112"/>
        <end position="117"/>
    </location>
</feature>
<feature type="strand" evidence="37">
    <location>
        <begin position="121"/>
        <end position="123"/>
    </location>
</feature>
<feature type="strand" evidence="31">
    <location>
        <begin position="127"/>
        <end position="129"/>
    </location>
</feature>
<feature type="strand" evidence="33">
    <location>
        <begin position="132"/>
        <end position="134"/>
    </location>
</feature>
<feature type="helix" evidence="32">
    <location>
        <begin position="136"/>
        <end position="138"/>
    </location>
</feature>
<feature type="strand" evidence="31">
    <location>
        <begin position="141"/>
        <end position="150"/>
    </location>
</feature>
<feature type="strand" evidence="31">
    <location>
        <begin position="152"/>
        <end position="156"/>
    </location>
</feature>
<feature type="helix" evidence="31">
    <location>
        <begin position="160"/>
        <end position="162"/>
    </location>
</feature>
<feature type="strand" evidence="31">
    <location>
        <begin position="163"/>
        <end position="171"/>
    </location>
</feature>
<feature type="strand" evidence="31">
    <location>
        <begin position="183"/>
        <end position="188"/>
    </location>
</feature>
<feature type="strand" evidence="32">
    <location>
        <begin position="191"/>
        <end position="195"/>
    </location>
</feature>
<feature type="strand" evidence="31">
    <location>
        <begin position="197"/>
        <end position="204"/>
    </location>
</feature>
<feature type="strand" evidence="31">
    <location>
        <begin position="206"/>
        <end position="208"/>
    </location>
</feature>
<feature type="strand" evidence="38">
    <location>
        <begin position="210"/>
        <end position="212"/>
    </location>
</feature>
<feature type="strand" evidence="31">
    <location>
        <begin position="214"/>
        <end position="222"/>
    </location>
</feature>
<feature type="strand" evidence="31">
    <location>
        <begin position="224"/>
        <end position="226"/>
    </location>
</feature>
<feature type="strand" evidence="31">
    <location>
        <begin position="228"/>
        <end position="258"/>
    </location>
</feature>
<feature type="strand" evidence="31">
    <location>
        <begin position="266"/>
        <end position="274"/>
    </location>
</feature>
<feature type="helix" evidence="33">
    <location>
        <begin position="279"/>
        <end position="281"/>
    </location>
</feature>
<feature type="strand" evidence="31">
    <location>
        <begin position="288"/>
        <end position="290"/>
    </location>
</feature>
<feature type="strand" evidence="31">
    <location>
        <begin position="293"/>
        <end position="295"/>
    </location>
</feature>
<feature type="turn" evidence="36">
    <location>
        <begin position="308"/>
        <end position="310"/>
    </location>
</feature>
<feature type="strand" evidence="31">
    <location>
        <begin position="315"/>
        <end position="329"/>
    </location>
</feature>
<feature type="turn" evidence="31">
    <location>
        <begin position="334"/>
        <end position="338"/>
    </location>
</feature>
<feature type="strand" evidence="31">
    <location>
        <begin position="343"/>
        <end position="351"/>
    </location>
</feature>
<feature type="strand" evidence="35">
    <location>
        <begin position="357"/>
        <end position="359"/>
    </location>
</feature>
<feature type="strand" evidence="35">
    <location>
        <begin position="363"/>
        <end position="367"/>
    </location>
</feature>
<feature type="strand" evidence="33">
    <location>
        <begin position="386"/>
        <end position="390"/>
    </location>
</feature>
<name>ARRB1_RAT</name>
<reference key="1">
    <citation type="journal article" date="1992" name="J. Biol. Chem.">
        <title>Beta-arrestin2, a novel member of the arrestin/beta-arrestin gene family.</title>
        <authorList>
            <person name="Attramadal H."/>
            <person name="Arriza J.L."/>
            <person name="Aoki C."/>
            <person name="Dawson T.M."/>
            <person name="Codina J."/>
            <person name="Kwatra M.M."/>
            <person name="Snyder S.H."/>
            <person name="Caron M.G."/>
            <person name="Lefkowitz R.J."/>
        </authorList>
    </citation>
    <scope>NUCLEOTIDE SEQUENCE [MRNA]</scope>
    <source>
        <strain>Sprague-Dawley</strain>
        <tissue>Brain</tissue>
    </source>
</reference>
<reference key="2">
    <citation type="journal article" date="1996" name="Science">
        <title>Role of beta-arrestin in mediating agonist-promoted G protein-coupled receptor internalization.</title>
        <authorList>
            <person name="Ferguson S.S.G."/>
            <person name="Downey W.E. III"/>
            <person name="Colapietro A.-M."/>
            <person name="Barak L.S."/>
            <person name="Menard L."/>
            <person name="Caron M.G."/>
        </authorList>
    </citation>
    <scope>FUNCTION IN INTERNALIZATION OF ADRB2</scope>
    <scope>MUTAGENESIS OF VAL-53</scope>
</reference>
<reference key="3">
    <citation type="journal article" date="1997" name="J. Biol. Chem.">
        <title>Clathrin-mediated endocytosis of the beta-adrenergic receptor is regulated by phosphorylation/dephosphorylation of beta-arrestin1.</title>
        <authorList>
            <person name="Lin F.-T."/>
            <person name="Krueger K.M."/>
            <person name="Kendall H.E."/>
            <person name="Daaka Y."/>
            <person name="Fredericks Z.L."/>
            <person name="Pitcher J.A."/>
            <person name="Lefkowitz R.J."/>
        </authorList>
    </citation>
    <scope>FUNCTION IN DESENSITIZATION</scope>
    <scope>FUNCTION IN INTERNALIZATION OF ADBR2</scope>
    <scope>PHOSPHORYLATION AT SER-412</scope>
    <scope>INTERACTION WITH ADRB2 AND CLTC</scope>
    <scope>MUTAGENESIS OF SER-412</scope>
</reference>
<reference key="4">
    <citation type="journal article" date="1998" name="J. Biol. Chem.">
        <title>beta-arrestins regulate mitogenic signaling and clathrin-mediated endocytosis of the insulin-like growth factor I receptor.</title>
        <authorList>
            <person name="Lin F.-T."/>
            <person name="Daaka Y."/>
            <person name="Lefkowitz R.J."/>
        </authorList>
    </citation>
    <scope>FUNCTION IN INTERNALIZATION OF IGFR1</scope>
    <scope>FUNCTION IN MAPK SIGNALING</scope>
    <scope>INTERACTION WITH IGF1R</scope>
    <scope>MUTAGENESIS OF SER-412</scope>
</reference>
<reference key="5">
    <citation type="journal article" date="1999" name="J. Biol. Chem.">
        <title>Regulation of muscarinic acetylcholine receptor sequestration and function by beta-arrestin.</title>
        <authorList>
            <person name="Voegler O."/>
            <person name="Nolte B."/>
            <person name="Voss M."/>
            <person name="Schmidt M."/>
            <person name="Jakobs K.H."/>
            <person name="van Koppen C.J."/>
        </authorList>
    </citation>
    <scope>FUNCTION IN INTERNALIZATION OF CHRM1; CHRM3 AND CHRM4</scope>
</reference>
<reference key="6">
    <citation type="journal article" date="1999" name="J. Biol. Chem.">
        <title>beta-arrestins regulate interleukin-8-induced CXCR1 internalization.</title>
        <authorList>
            <person name="Barlic J."/>
            <person name="Khandaker M.H."/>
            <person name="Mahon E."/>
            <person name="Andrews J."/>
            <person name="DeVries M.E."/>
            <person name="Mitchell G.B."/>
            <person name="Rahimpour R."/>
            <person name="Tan C.M."/>
            <person name="Ferguson S.S.G."/>
            <person name="Kelvin D.J."/>
        </authorList>
    </citation>
    <scope>FUNCTION IN INTERNALIZATION OF IL8RA</scope>
    <scope>SUBCELLULAR LOCATION</scope>
</reference>
<reference key="7">
    <citation type="journal article" date="1999" name="Proc. Natl. Acad. Sci. U.S.A.">
        <title>The beta2-adrenergic receptor/betaarrestin complex recruits the clathrin adaptor AP-2 during endocytosis.</title>
        <authorList>
            <person name="Laporte S.A."/>
            <person name="Oakley R.H."/>
            <person name="Zhang J."/>
            <person name="Holt J.A."/>
            <person name="Ferguson S.S.G."/>
            <person name="Caron M.G."/>
            <person name="Barak L.S."/>
        </authorList>
    </citation>
    <scope>INTERACTION WITH AP2B1</scope>
    <scope>SUBCELLULAR LOCATION</scope>
</reference>
<reference key="8">
    <citation type="journal article" date="1999" name="Science">
        <title>Beta-arrestin-dependent formation of beta2 adrenergic receptor-Src protein kinase complexes.</title>
        <authorList>
            <person name="Luttrell L.M."/>
            <person name="Ferguson S.S.G."/>
            <person name="Daaka Y."/>
            <person name="Miller W.E."/>
            <person name="Maudsley S."/>
            <person name="Della Rocca G.J."/>
            <person name="Lin F.-T."/>
            <person name="Kawakatsu H."/>
            <person name="Owada K."/>
            <person name="Luttrell D.K."/>
            <person name="Caron M.G."/>
            <person name="Lefkowitz R.J."/>
        </authorList>
    </citation>
    <scope>FUNCTION IN MAPK SIGNALING</scope>
    <scope>SUBCELLULAR LOCATION</scope>
    <scope>INTERACTION WITH SRC</scope>
    <scope>MUTAGENESIS OF VAL-53; PRO-91; PRO-121 AND SER-412</scope>
</reference>
<reference key="9">
    <citation type="journal article" date="2000" name="J. Biol. Chem.">
        <title>beta-arrestin1 interacts with the catalytic domain of the tyrosine kinase c-SRC. Role of beta-arrestin1-dependent targeting of c-SRC in receptor endocytosis.</title>
        <authorList>
            <person name="Miller W.E."/>
            <person name="Maudsley S."/>
            <person name="Ahn S."/>
            <person name="Khan K.D."/>
            <person name="Luttrell L.M."/>
            <person name="Lefkowitz R.J."/>
        </authorList>
    </citation>
    <scope>INTERACTION WITH SRC</scope>
</reference>
<reference key="10">
    <citation type="journal article" date="2000" name="J. Biol. Chem.">
        <title>Regulation and intracellular trafficking pathways of the endothelin receptors.</title>
        <authorList>
            <person name="Bremnes T."/>
            <person name="Paasche J.D."/>
            <person name="Mehlum A."/>
            <person name="Sandberg C."/>
            <person name="Bremnes B."/>
            <person name="Attramadal H."/>
        </authorList>
    </citation>
    <scope>FUNCTION IN INTERNALIZATION OF EDNRA AND EDNRB</scope>
    <scope>MUTAGENESIS OF VAL-53</scope>
</reference>
<reference key="11">
    <citation type="journal article" date="2000" name="J. Biol. Chem.">
        <title>The interaction of beta-arrestin with the AP-2 adaptor is required for the clustering of beta 2-adrenergic receptor into clathrin-coated pits.</title>
        <authorList>
            <person name="Laporte S.A."/>
            <person name="Oakley R.H."/>
            <person name="Holt J.A."/>
            <person name="Barak L.S."/>
            <person name="Caron M.G."/>
        </authorList>
    </citation>
    <scope>INTERACTION WITH AP2B1 AND CLTC</scope>
    <scope>SUBCELLULAR LOCATION</scope>
</reference>
<reference key="12">
    <citation type="journal article" date="2000" name="J. Cell Biol.">
        <title>beta-arrestin-dependent endocytosis of proteinase-activated receptor 2 is required for intracellular targeting of activated ERK1/2.</title>
        <authorList>
            <person name="DeFea K.A."/>
            <person name="Zalevsky J."/>
            <person name="Thoma M.S."/>
            <person name="Dery O."/>
            <person name="Mullins R.D."/>
            <person name="Bunnett N.W."/>
        </authorList>
    </citation>
    <scope>FUNCTION IN MAPK SIGNALING</scope>
    <scope>INTERACTION WITH RAF1</scope>
    <scope>SUBCELLULAR LOCATION</scope>
    <scope>IDENTIFICATION IN A COMPLEX WITH F2RL1; MAPK1; MAPK3 AND RAF1</scope>
</reference>
<reference key="13">
    <citation type="journal article" date="2000" name="Nat. Immunol.">
        <title>Regulation of tyrosine kinase activation and granule release through beta-arrestin by CXCRI.</title>
        <authorList>
            <person name="Barlic J."/>
            <person name="Andrews J.D."/>
            <person name="Kelvin A.A."/>
            <person name="Bosinger S.E."/>
            <person name="DeVries M.E."/>
            <person name="Xu L."/>
            <person name="Dobransky T."/>
            <person name="Feldman R.D."/>
            <person name="Ferguson S.S."/>
            <person name="Kelvin D.J."/>
        </authorList>
    </citation>
    <scope>INTERACTION WITH HCK AND CXCR1</scope>
</reference>
<reference key="14">
    <citation type="journal article" date="2000" name="Proc. Natl. Acad. Sci. U.S.A.">
        <title>The proliferative and antiapoptotic effects of substance P are facilitated by formation of a beta -arrestin-dependent scaffolding complex.</title>
        <authorList>
            <person name="DeFea K.A."/>
            <person name="Vaughn Z.D."/>
            <person name="O'Bryan E.M."/>
            <person name="Nishijima D."/>
            <person name="Dery O."/>
            <person name="Bunnett N.W."/>
        </authorList>
    </citation>
    <scope>FUNCTION IN MAPK SIGNALING</scope>
    <scope>SUBCELLULAR LOCATION</scope>
    <scope>INTERACTION WITH SRC AND TACR1</scope>
    <scope>IDENTIFICATION IN A COMPLEX WITH SRC; MAPK1; MAPK3 AND TACR1</scope>
</reference>
<reference key="15">
    <citation type="journal article" date="2001" name="Proc. Natl. Acad. Sci. U.S.A.">
        <title>beta-Arrestin1 modulates lymphoid enhancer factor transcriptional activity through interaction with phosphorylated dishevelled proteins.</title>
        <authorList>
            <person name="Chen W."/>
            <person name="Hu L.A."/>
            <person name="Semenov M.V."/>
            <person name="Yanagawa S."/>
            <person name="Kikuchi A."/>
            <person name="Lefkowitz R.J."/>
            <person name="Miller W.E."/>
        </authorList>
    </citation>
    <scope>FUNCTION IN TRANSCRIPTIONAL REGULATION</scope>
    <scope>INTERACTION WITH DVL1 AND DVL2</scope>
</reference>
<reference key="16">
    <citation type="journal article" date="2001" name="Mol. Endocrinol.">
        <title>Association of beta-Arrestin 1 with the type 1A angiotensin II receptor involves phosphorylation of the receptor carboxyl terminus and correlates with receptor internalization.</title>
        <authorList>
            <person name="Qian H."/>
            <person name="Pipolo L."/>
            <person name="Thomas W.G."/>
        </authorList>
    </citation>
    <scope>FUNCTION INTERNALIZATION OF AGTR1</scope>
    <scope>INTERACTION WITH AGTR1</scope>
</reference>
<reference key="17">
    <citation type="journal article" date="2002" name="J. Biol. Chem.">
        <title>beta-Arrestin/AP-2 interaction in G protein-coupled receptor internalization: identification of a beta-arrestin binding site in beta 2-adaptin.</title>
        <authorList>
            <person name="Laporte S.A."/>
            <person name="Miller W.E."/>
            <person name="Kim K.-M."/>
            <person name="Caron M.G."/>
        </authorList>
    </citation>
    <scope>INTERACTION WITH AP2B1</scope>
</reference>
<reference key="18">
    <citation type="journal article" date="2002" name="J. Biol. Chem.">
        <title>beta-Arrestin scaffolding of the ERK cascade enhances cytosolic ERK activity but inhibits ERK-mediated transcription following angiotensin AT1a receptor stimulation.</title>
        <authorList>
            <person name="Tohgo A."/>
            <person name="Pierce K.L."/>
            <person name="Choy E.W."/>
            <person name="Lefkowitz R.J."/>
            <person name="Luttrell L.M."/>
        </authorList>
    </citation>
    <scope>FUNCTION IN ERK SIGNALING</scope>
</reference>
<reference key="19">
    <citation type="journal article" date="2002" name="J. Biol. Chem.">
        <title>alpha-Thrombin induces rapid and sustained Akt phosphorylation by beta-arrestin1-dependent and -independent mechanisms, and only the sustained Akt phosphorylation is essential for G1 phase progression.</title>
        <authorList>
            <person name="Goel R."/>
            <person name="Phillips-Mason P.J."/>
            <person name="Raben D.M."/>
            <person name="Baldassare J.J."/>
        </authorList>
    </citation>
    <scope>FUNCTION IN AKT1 SIGNALING</scope>
</reference>
<reference key="20">
    <citation type="journal article" date="2002" name="Science">
        <title>Targeting of cyclic AMP degradation to beta 2-adrenergic receptors by beta-arrestins.</title>
        <authorList>
            <person name="Perry S.J."/>
            <person name="Baillie G.S."/>
            <person name="Kohout T.A."/>
            <person name="McPhee I."/>
            <person name="Magiera M.M."/>
            <person name="Ang K.L."/>
            <person name="Miller W.E."/>
            <person name="McLean A.J."/>
            <person name="Conti M."/>
            <person name="Houslay M.D."/>
            <person name="Lefkowitz R.J."/>
        </authorList>
    </citation>
    <scope>FUNCTION IN CAMP DEGRADATION</scope>
    <scope>INTERACTION WITH PDE4D</scope>
</reference>
<reference key="21">
    <citation type="journal article" date="2003" name="J. Biol. Chem.">
        <title>Role of G protein-coupled receptor kinase 4 and beta-arrestin 1 in agonist-stimulated metabotropic glutamate receptor 1 internalization and activation of mitogen-activated protein kinases.</title>
        <authorList>
            <person name="Iacovelli L."/>
            <person name="Salvatore L."/>
            <person name="Capobianco L."/>
            <person name="Picascia A."/>
            <person name="Barletta E."/>
            <person name="Storto M."/>
            <person name="Mariggio S."/>
            <person name="Sallese M."/>
            <person name="Porcellini A."/>
            <person name="Nicoletti F."/>
            <person name="De Blasi A."/>
        </authorList>
    </citation>
    <scope>FUNCTION IN INTERNALIZATION OF GRM1</scope>
</reference>
<reference key="22">
    <citation type="journal article" date="2003" name="J. Biol. Chem.">
        <title>A beta-arrestin-dependent scaffold is associated with prolonged MAPK activation in pseudopodia during protease-activated receptor-2-induced chemotaxis.</title>
        <authorList>
            <person name="Ge L."/>
            <person name="Ly Y."/>
            <person name="Hollenberg M."/>
            <person name="DeFea K."/>
        </authorList>
    </citation>
    <scope>FUNCTION IN CYTOSKELETAL REARRANGEMENT AND CHEMOTAXIS</scope>
    <scope>SUBCELLULAR LOCATION</scope>
</reference>
<reference key="23">
    <citation type="journal article" date="2004" name="Proc. Natl. Acad. Sci. U.S.A.">
        <title>beta-Arrestin inhibits NF-kappaB activity by means of its interaction with the NF-kappaB inhibitor IkappaBalpha.</title>
        <authorList>
            <person name="Witherow D.S."/>
            <person name="Garrison T.R."/>
            <person name="Miller W.E."/>
            <person name="Lefkowitz R.J."/>
        </authorList>
    </citation>
    <scope>FUNCTION IN REGULATION OF NF-KAPPA-B</scope>
    <scope>INTERACTION WITH CHUK; IKBKB AND MAP3K14</scope>
</reference>
<reference key="24">
    <citation type="journal article" date="2005" name="J. Biol. Chem.">
        <title>{beta}-Arrestin is crucial for ubiquitination and down-regulation of the insulin-like growth factor-1 receptor by acting as adaptor for the MDM2 E3 ligase.</title>
        <authorList>
            <person name="Girnita L."/>
            <person name="Shenoy S.K."/>
            <person name="Sehat B."/>
            <person name="Vasilcanu R."/>
            <person name="Girnita A."/>
            <person name="Lefkowitz R.J."/>
            <person name="Larsson O."/>
        </authorList>
    </citation>
    <scope>FUNCTION IN UBIQUITINATION OF IGF1R</scope>
</reference>
<reference key="25">
    <citation type="journal article" date="2006" name="Proc. Natl. Acad. Sci. U.S.A.">
        <title>Quantitative phosphoproteomics of vasopressin-sensitive renal cells: regulation of aquaporin-2 phosphorylation at two sites.</title>
        <authorList>
            <person name="Hoffert J.D."/>
            <person name="Pisitkun T."/>
            <person name="Wang G."/>
            <person name="Shen R.-F."/>
            <person name="Knepper M.A."/>
        </authorList>
    </citation>
    <scope>PHOSPHORYLATION [LARGE SCALE ANALYSIS] AT SER-412</scope>
    <scope>IDENTIFICATION BY MASS SPECTROMETRY [LARGE SCALE ANALYSIS]</scope>
</reference>
<reference key="26">
    <citation type="journal article" date="2007" name="Cell. Signal.">
        <title>The role of beta-arrestins in the formyl peptide receptor-like 1 internalization and signaling.</title>
        <authorList>
            <person name="Huet E."/>
            <person name="Boulay F."/>
            <person name="Barral S."/>
            <person name="Rabiet M.J."/>
        </authorList>
    </citation>
    <scope>FUNCTION IN INTERNALIZATION OF FPR1</scope>
</reference>
<reference key="27">
    <citation type="journal article" date="2008" name="J. Biol. Chem.">
        <title>Role of beta-arrestin-mediated desensitization and signaling in the control of angiotensin AT1a receptor-stimulated transcription.</title>
        <authorList>
            <person name="Lee M.-H."/>
            <person name="El-Shewy H.M."/>
            <person name="Luttrell D.K."/>
            <person name="Luttrell L.M."/>
        </authorList>
    </citation>
    <scope>FUNCTION IN DESENSITIZATION OF AGTR1</scope>
</reference>
<reference key="28">
    <citation type="journal article" date="2012" name="Nature">
        <title>APJ acts as a dual receptor in cardiac hypertrophy.</title>
        <authorList>
            <person name="Scimia M.C."/>
            <person name="Hurtado C."/>
            <person name="Ray S."/>
            <person name="Metzler S."/>
            <person name="Wei K."/>
            <person name="Wang J."/>
            <person name="Woods C.E."/>
            <person name="Purcell N.H."/>
            <person name="Catalucci D."/>
            <person name="Akasaka T."/>
            <person name="Bueno O.F."/>
            <person name="Vlasuk G.P."/>
            <person name="Kaliman P."/>
            <person name="Bodmer R."/>
            <person name="Smith L.H."/>
            <person name="Ashley E."/>
            <person name="Mercola M."/>
            <person name="Brown J.H."/>
            <person name="Ruiz-Lozano P."/>
        </authorList>
    </citation>
    <scope>FUNCTION</scope>
</reference>
<reference key="29">
    <citation type="journal article" date="2012" name="Nat. Commun.">
        <title>Quantitative maps of protein phosphorylation sites across 14 different rat organs and tissues.</title>
        <authorList>
            <person name="Lundby A."/>
            <person name="Secher A."/>
            <person name="Lage K."/>
            <person name="Nordsborg N.B."/>
            <person name="Dmytriyev A."/>
            <person name="Lundby C."/>
            <person name="Olsen J.V."/>
        </authorList>
    </citation>
    <scope>PHOSPHORYLATION [LARGE SCALE ANALYSIS] AT SER-412</scope>
    <scope>IDENTIFICATION BY MASS SPECTROMETRY [LARGE SCALE ANALYSIS]</scope>
</reference>
<reference key="30">
    <citation type="journal article" date="2013" name="J. Cell Sci.">
        <title>Alpha-arrestin 1 (ARRDC1) and beta-arrestins cooperate to mediate Notch degradation in mammals.</title>
        <authorList>
            <person name="Puca L."/>
            <person name="Chastagner P."/>
            <person name="Meas-Yedid V."/>
            <person name="Israel A."/>
            <person name="Brou C."/>
        </authorList>
    </citation>
    <scope>INTERACTION WITH ARRDC1</scope>
</reference>
<accession>P29066</accession>
<dbReference type="EMBL" id="M91589">
    <property type="protein sequence ID" value="AAA74459.1"/>
    <property type="molecule type" value="mRNA"/>
</dbReference>
<dbReference type="PIR" id="B43404">
    <property type="entry name" value="B43404"/>
</dbReference>
<dbReference type="RefSeq" id="NP_037042.1">
    <property type="nucleotide sequence ID" value="NM_012910.2"/>
</dbReference>
<dbReference type="PDB" id="4JQI">
    <property type="method" value="X-ray"/>
    <property type="resolution" value="2.60 A"/>
    <property type="chains" value="A=2-393"/>
</dbReference>
<dbReference type="PDB" id="6KL7">
    <property type="method" value="X-ray"/>
    <property type="resolution" value="2.79 A"/>
    <property type="chains" value="A/B=1-418"/>
</dbReference>
<dbReference type="PDB" id="6U1N">
    <property type="method" value="EM"/>
    <property type="resolution" value="4.00 A"/>
    <property type="chains" value="C=2-393"/>
</dbReference>
<dbReference type="PDB" id="8GO8">
    <property type="method" value="EM"/>
    <property type="resolution" value="3.41 A"/>
    <property type="chains" value="A/B=1-418"/>
</dbReference>
<dbReference type="PDB" id="8GP3">
    <property type="method" value="EM"/>
    <property type="resolution" value="4.80 A"/>
    <property type="chains" value="A/B=1-418"/>
</dbReference>
<dbReference type="PDB" id="8HST">
    <property type="method" value="X-ray"/>
    <property type="resolution" value="2.66 A"/>
    <property type="chains" value="A/B=1-394"/>
</dbReference>
<dbReference type="PDB" id="8HSV">
    <property type="method" value="X-ray"/>
    <property type="resolution" value="3.00 A"/>
    <property type="chains" value="A/B=1-394"/>
</dbReference>
<dbReference type="PDB" id="8I0N">
    <property type="method" value="EM"/>
    <property type="resolution" value="3.26 A"/>
    <property type="chains" value="A/B=1-418"/>
</dbReference>
<dbReference type="PDB" id="8I0Q">
    <property type="method" value="EM"/>
    <property type="resolution" value="4.45 A"/>
    <property type="chains" value="A/B=1-418"/>
</dbReference>
<dbReference type="PDB" id="8J8Z">
    <property type="method" value="EM"/>
    <property type="resolution" value="3.40 A"/>
    <property type="chains" value="A/B=1-418"/>
</dbReference>
<dbReference type="PDB" id="8JA3">
    <property type="method" value="EM"/>
    <property type="resolution" value="3.94 A"/>
    <property type="chains" value="A/B=1-357"/>
</dbReference>
<dbReference type="PDB" id="9BT8">
    <property type="method" value="EM"/>
    <property type="resolution" value="3.34 A"/>
    <property type="chains" value="B=2-393"/>
</dbReference>
<dbReference type="PDB" id="9CX3">
    <property type="method" value="EM"/>
    <property type="resolution" value="3.47 A"/>
    <property type="chains" value="B=2-393"/>
</dbReference>
<dbReference type="PDB" id="9CX9">
    <property type="method" value="EM"/>
    <property type="resolution" value="3.34 A"/>
    <property type="chains" value="A=2-393"/>
</dbReference>
<dbReference type="PDB" id="9DNG">
    <property type="method" value="EM"/>
    <property type="resolution" value="3.52 A"/>
    <property type="chains" value="A=2-393"/>
</dbReference>
<dbReference type="PDB" id="9DNM">
    <property type="method" value="EM"/>
    <property type="resolution" value="3.47 A"/>
    <property type="chains" value="A=2-393"/>
</dbReference>
<dbReference type="PDBsum" id="4JQI"/>
<dbReference type="PDBsum" id="6KL7"/>
<dbReference type="PDBsum" id="6U1N"/>
<dbReference type="PDBsum" id="8GO8"/>
<dbReference type="PDBsum" id="8GP3"/>
<dbReference type="PDBsum" id="8HST"/>
<dbReference type="PDBsum" id="8HSV"/>
<dbReference type="PDBsum" id="8I0N"/>
<dbReference type="PDBsum" id="8I0Q"/>
<dbReference type="PDBsum" id="8J8Z"/>
<dbReference type="PDBsum" id="8JA3"/>
<dbReference type="PDBsum" id="9BT8"/>
<dbReference type="PDBsum" id="9CX3"/>
<dbReference type="PDBsum" id="9CX9"/>
<dbReference type="PDBsum" id="9DNG"/>
<dbReference type="PDBsum" id="9DNM"/>
<dbReference type="EMDB" id="EMD-20612"/>
<dbReference type="EMDB" id="EMD-34173"/>
<dbReference type="EMDB" id="EMD-34188"/>
<dbReference type="EMDB" id="EMD-35104"/>
<dbReference type="EMDB" id="EMD-35106"/>
<dbReference type="EMDB" id="EMD-36082"/>
<dbReference type="EMDB" id="EMD-36124"/>
<dbReference type="EMDB" id="EMD-44881"/>
<dbReference type="EMDB" id="EMD-45977"/>
<dbReference type="EMDB" id="EMD-45982"/>
<dbReference type="EMDB" id="EMD-47040"/>
<dbReference type="EMDB" id="EMD-47042"/>
<dbReference type="SMR" id="P29066"/>
<dbReference type="BioGRID" id="247425">
    <property type="interactions" value="13"/>
</dbReference>
<dbReference type="CORUM" id="P29066"/>
<dbReference type="DIP" id="DIP-40808N"/>
<dbReference type="FunCoup" id="P29066">
    <property type="interactions" value="3281"/>
</dbReference>
<dbReference type="IntAct" id="P29066">
    <property type="interactions" value="16"/>
</dbReference>
<dbReference type="MINT" id="P29066"/>
<dbReference type="STRING" id="10116.ENSRNOP00000046069"/>
<dbReference type="GlyGen" id="P29066">
    <property type="glycosylation" value="1 site"/>
</dbReference>
<dbReference type="iPTMnet" id="P29066"/>
<dbReference type="PhosphoSitePlus" id="P29066"/>
<dbReference type="jPOST" id="P29066"/>
<dbReference type="PaxDb" id="10116-ENSRNOP00000046069"/>
<dbReference type="ABCD" id="P29066">
    <property type="antibodies" value="1 sequenced antibody"/>
</dbReference>
<dbReference type="GeneID" id="25387"/>
<dbReference type="KEGG" id="rno:25387"/>
<dbReference type="AGR" id="RGD:2156"/>
<dbReference type="CTD" id="408"/>
<dbReference type="RGD" id="2156">
    <property type="gene designation" value="Arrb1"/>
</dbReference>
<dbReference type="VEuPathDB" id="HostDB:ENSRNOG00000030404"/>
<dbReference type="eggNOG" id="KOG3865">
    <property type="taxonomic scope" value="Eukaryota"/>
</dbReference>
<dbReference type="HOGENOM" id="CLU_033484_1_1_1"/>
<dbReference type="InParanoid" id="P29066"/>
<dbReference type="OrthoDB" id="298939at2759"/>
<dbReference type="PhylomeDB" id="P29066"/>
<dbReference type="TreeFam" id="TF314260"/>
<dbReference type="Reactome" id="R-RNO-418555">
    <property type="pathway name" value="G alpha (s) signalling events"/>
</dbReference>
<dbReference type="Reactome" id="R-RNO-432720">
    <property type="pathway name" value="Lysosome Vesicle Biogenesis"/>
</dbReference>
<dbReference type="Reactome" id="R-RNO-432722">
    <property type="pathway name" value="Golgi Associated Vesicle Biogenesis"/>
</dbReference>
<dbReference type="Reactome" id="R-RNO-456926">
    <property type="pathway name" value="Thrombin signalling through proteinase activated receptors (PARs)"/>
</dbReference>
<dbReference type="Reactome" id="R-RNO-5674135">
    <property type="pathway name" value="MAP2K and MAPK activation"/>
</dbReference>
<dbReference type="Reactome" id="R-RNO-5689880">
    <property type="pathway name" value="Ub-specific processing proteases"/>
</dbReference>
<dbReference type="Reactome" id="R-RNO-8856825">
    <property type="pathway name" value="Cargo recognition for clathrin-mediated endocytosis"/>
</dbReference>
<dbReference type="Reactome" id="R-RNO-8856828">
    <property type="pathway name" value="Clathrin-mediated endocytosis"/>
</dbReference>
<dbReference type="Reactome" id="R-RNO-9839389">
    <property type="pathway name" value="TGFBR3 regulates TGF-beta signaling"/>
</dbReference>
<dbReference type="EvolutionaryTrace" id="P29066"/>
<dbReference type="PRO" id="PR:P29066"/>
<dbReference type="Proteomes" id="UP000002494">
    <property type="component" value="Chromosome 1"/>
</dbReference>
<dbReference type="Bgee" id="ENSRNOG00000030404">
    <property type="expression patterns" value="Expressed in frontal cortex and 18 other cell types or tissues"/>
</dbReference>
<dbReference type="GO" id="GO:0016323">
    <property type="term" value="C:basolateral plasma membrane"/>
    <property type="evidence" value="ECO:0000314"/>
    <property type="project" value="RGD"/>
</dbReference>
<dbReference type="GO" id="GO:0000785">
    <property type="term" value="C:chromatin"/>
    <property type="evidence" value="ECO:0000266"/>
    <property type="project" value="RGD"/>
</dbReference>
<dbReference type="GO" id="GO:0005905">
    <property type="term" value="C:clathrin-coated pit"/>
    <property type="evidence" value="ECO:0007669"/>
    <property type="project" value="UniProtKB-SubCell"/>
</dbReference>
<dbReference type="GO" id="GO:0005737">
    <property type="term" value="C:cytoplasm"/>
    <property type="evidence" value="ECO:0000266"/>
    <property type="project" value="RGD"/>
</dbReference>
<dbReference type="GO" id="GO:0031410">
    <property type="term" value="C:cytoplasmic vesicle"/>
    <property type="evidence" value="ECO:0000266"/>
    <property type="project" value="RGD"/>
</dbReference>
<dbReference type="GO" id="GO:0005829">
    <property type="term" value="C:cytosol"/>
    <property type="evidence" value="ECO:0000266"/>
    <property type="project" value="RGD"/>
</dbReference>
<dbReference type="GO" id="GO:0043197">
    <property type="term" value="C:dendritic spine"/>
    <property type="evidence" value="ECO:0000314"/>
    <property type="project" value="RGD"/>
</dbReference>
<dbReference type="GO" id="GO:0005768">
    <property type="term" value="C:endosome"/>
    <property type="evidence" value="ECO:0000314"/>
    <property type="project" value="RGD"/>
</dbReference>
<dbReference type="GO" id="GO:0098978">
    <property type="term" value="C:glutamatergic synapse"/>
    <property type="evidence" value="ECO:0000314"/>
    <property type="project" value="SynGO"/>
</dbReference>
<dbReference type="GO" id="GO:0005634">
    <property type="term" value="C:nucleus"/>
    <property type="evidence" value="ECO:0000266"/>
    <property type="project" value="RGD"/>
</dbReference>
<dbReference type="GO" id="GO:0005886">
    <property type="term" value="C:plasma membrane"/>
    <property type="evidence" value="ECO:0000318"/>
    <property type="project" value="GO_Central"/>
</dbReference>
<dbReference type="GO" id="GO:0014069">
    <property type="term" value="C:postsynaptic density"/>
    <property type="evidence" value="ECO:0000314"/>
    <property type="project" value="SynGO"/>
</dbReference>
<dbReference type="GO" id="GO:0045211">
    <property type="term" value="C:postsynaptic membrane"/>
    <property type="evidence" value="ECO:0000314"/>
    <property type="project" value="RGD"/>
</dbReference>
<dbReference type="GO" id="GO:0031143">
    <property type="term" value="C:pseudopodium"/>
    <property type="evidence" value="ECO:0000266"/>
    <property type="project" value="RGD"/>
</dbReference>
<dbReference type="GO" id="GO:0031691">
    <property type="term" value="F:alpha-1A adrenergic receptor binding"/>
    <property type="evidence" value="ECO:0000353"/>
    <property type="project" value="RGD"/>
</dbReference>
<dbReference type="GO" id="GO:0031692">
    <property type="term" value="F:alpha-1B adrenergic receptor binding"/>
    <property type="evidence" value="ECO:0000314"/>
    <property type="project" value="RGD"/>
</dbReference>
<dbReference type="GO" id="GO:0031701">
    <property type="term" value="F:angiotensin receptor binding"/>
    <property type="evidence" value="ECO:0000266"/>
    <property type="project" value="RGD"/>
</dbReference>
<dbReference type="GO" id="GO:0035612">
    <property type="term" value="F:AP-2 adaptor complex binding"/>
    <property type="evidence" value="ECO:0000314"/>
    <property type="project" value="BHF-UCL"/>
</dbReference>
<dbReference type="GO" id="GO:1990763">
    <property type="term" value="F:arrestin family protein binding"/>
    <property type="evidence" value="ECO:0000353"/>
    <property type="project" value="UniProtKB"/>
</dbReference>
<dbReference type="GO" id="GO:0035615">
    <property type="term" value="F:clathrin adaptor activity"/>
    <property type="evidence" value="ECO:0000314"/>
    <property type="project" value="BHF-UCL"/>
</dbReference>
<dbReference type="GO" id="GO:0030276">
    <property type="term" value="F:clathrin binding"/>
    <property type="evidence" value="ECO:0000314"/>
    <property type="project" value="RGD"/>
</dbReference>
<dbReference type="GO" id="GO:0043027">
    <property type="term" value="F:cysteine-type endopeptidase inhibitor activity involved in apoptotic process"/>
    <property type="evidence" value="ECO:0000266"/>
    <property type="project" value="RGD"/>
</dbReference>
<dbReference type="GO" id="GO:0019899">
    <property type="term" value="F:enzyme binding"/>
    <property type="evidence" value="ECO:0000353"/>
    <property type="project" value="RGD"/>
</dbReference>
<dbReference type="GO" id="GO:0031762">
    <property type="term" value="F:follicle-stimulating hormone receptor binding"/>
    <property type="evidence" value="ECO:0000353"/>
    <property type="project" value="RGD"/>
</dbReference>
<dbReference type="GO" id="GO:0001664">
    <property type="term" value="F:G protein-coupled receptor binding"/>
    <property type="evidence" value="ECO:0000318"/>
    <property type="project" value="GO_Central"/>
</dbReference>
<dbReference type="GO" id="GO:0005096">
    <property type="term" value="F:GTPase activator activity"/>
    <property type="evidence" value="ECO:0000266"/>
    <property type="project" value="RGD"/>
</dbReference>
<dbReference type="GO" id="GO:0005159">
    <property type="term" value="F:insulin-like growth factor receptor binding"/>
    <property type="evidence" value="ECO:0000266"/>
    <property type="project" value="RGD"/>
</dbReference>
<dbReference type="GO" id="GO:0031434">
    <property type="term" value="F:mitogen-activated protein kinase kinase binding"/>
    <property type="evidence" value="ECO:0000266"/>
    <property type="project" value="RGD"/>
</dbReference>
<dbReference type="GO" id="GO:0060090">
    <property type="term" value="F:molecular adaptor activity"/>
    <property type="evidence" value="ECO:0000266"/>
    <property type="project" value="RGD"/>
</dbReference>
<dbReference type="GO" id="GO:0030331">
    <property type="term" value="F:nuclear estrogen receptor binding"/>
    <property type="evidence" value="ECO:0000353"/>
    <property type="project" value="RGD"/>
</dbReference>
<dbReference type="GO" id="GO:0051219">
    <property type="term" value="F:phosphoprotein binding"/>
    <property type="evidence" value="ECO:0000353"/>
    <property type="project" value="UniProtKB"/>
</dbReference>
<dbReference type="GO" id="GO:0045309">
    <property type="term" value="F:protein phosphorylated amino acid binding"/>
    <property type="evidence" value="ECO:0000314"/>
    <property type="project" value="RGD"/>
</dbReference>
<dbReference type="GO" id="GO:0005102">
    <property type="term" value="F:signaling receptor binding"/>
    <property type="evidence" value="ECO:0000353"/>
    <property type="project" value="RGD"/>
</dbReference>
<dbReference type="GO" id="GO:0003713">
    <property type="term" value="F:transcription coactivator activity"/>
    <property type="evidence" value="ECO:0000266"/>
    <property type="project" value="RGD"/>
</dbReference>
<dbReference type="GO" id="GO:0044325">
    <property type="term" value="F:transmembrane transporter binding"/>
    <property type="evidence" value="ECO:0000353"/>
    <property type="project" value="RGD"/>
</dbReference>
<dbReference type="GO" id="GO:0031625">
    <property type="term" value="F:ubiquitin protein ligase binding"/>
    <property type="evidence" value="ECO:0000266"/>
    <property type="project" value="RGD"/>
</dbReference>
<dbReference type="GO" id="GO:0031896">
    <property type="term" value="F:V2 vasopressin receptor binding"/>
    <property type="evidence" value="ECO:0000314"/>
    <property type="project" value="RGD"/>
</dbReference>
<dbReference type="GO" id="GO:0007188">
    <property type="term" value="P:adenylate cyclase-modulating G protein-coupled receptor signaling pathway"/>
    <property type="evidence" value="ECO:0000304"/>
    <property type="project" value="RGD"/>
</dbReference>
<dbReference type="GO" id="GO:0006897">
    <property type="term" value="P:endocytosis"/>
    <property type="evidence" value="ECO:0000314"/>
    <property type="project" value="RGD"/>
</dbReference>
<dbReference type="GO" id="GO:0042699">
    <property type="term" value="P:follicle-stimulating hormone signaling pathway"/>
    <property type="evidence" value="ECO:0000314"/>
    <property type="project" value="RGD"/>
</dbReference>
<dbReference type="GO" id="GO:0002031">
    <property type="term" value="P:G protein-coupled receptor internalization"/>
    <property type="evidence" value="ECO:0000266"/>
    <property type="project" value="RGD"/>
</dbReference>
<dbReference type="GO" id="GO:0007186">
    <property type="term" value="P:G protein-coupled receptor signaling pathway"/>
    <property type="evidence" value="ECO:0000314"/>
    <property type="project" value="RGD"/>
</dbReference>
<dbReference type="GO" id="GO:0043066">
    <property type="term" value="P:negative regulation of apoptotic process"/>
    <property type="evidence" value="ECO:0000315"/>
    <property type="project" value="RGD"/>
</dbReference>
<dbReference type="GO" id="GO:0070373">
    <property type="term" value="P:negative regulation of ERK1 and ERK2 cascade"/>
    <property type="evidence" value="ECO:0000315"/>
    <property type="project" value="RGD"/>
</dbReference>
<dbReference type="GO" id="GO:0032715">
    <property type="term" value="P:negative regulation of interleukin-6 production"/>
    <property type="evidence" value="ECO:0000266"/>
    <property type="project" value="RGD"/>
</dbReference>
<dbReference type="GO" id="GO:0032717">
    <property type="term" value="P:negative regulation of interleukin-8 production"/>
    <property type="evidence" value="ECO:0000266"/>
    <property type="project" value="RGD"/>
</dbReference>
<dbReference type="GO" id="GO:0043524">
    <property type="term" value="P:negative regulation of neuron apoptotic process"/>
    <property type="evidence" value="ECO:0000315"/>
    <property type="project" value="RGD"/>
</dbReference>
<dbReference type="GO" id="GO:0045746">
    <property type="term" value="P:negative regulation of Notch signaling pathway"/>
    <property type="evidence" value="ECO:0000250"/>
    <property type="project" value="UniProtKB"/>
</dbReference>
<dbReference type="GO" id="GO:0031397">
    <property type="term" value="P:negative regulation of protein ubiquitination"/>
    <property type="evidence" value="ECO:0000266"/>
    <property type="project" value="RGD"/>
</dbReference>
<dbReference type="GO" id="GO:0007602">
    <property type="term" value="P:phototransduction"/>
    <property type="evidence" value="ECO:0000266"/>
    <property type="project" value="RGD"/>
</dbReference>
<dbReference type="GO" id="GO:0008284">
    <property type="term" value="P:positive regulation of cell population proliferation"/>
    <property type="evidence" value="ECO:0000315"/>
    <property type="project" value="RGD"/>
</dbReference>
<dbReference type="GO" id="GO:0070374">
    <property type="term" value="P:positive regulation of ERK1 and ERK2 cascade"/>
    <property type="evidence" value="ECO:0000315"/>
    <property type="project" value="RGD"/>
</dbReference>
<dbReference type="GO" id="GO:0035774">
    <property type="term" value="P:positive regulation of insulin secretion involved in cellular response to glucose stimulus"/>
    <property type="evidence" value="ECO:0000266"/>
    <property type="project" value="RGD"/>
</dbReference>
<dbReference type="GO" id="GO:0043410">
    <property type="term" value="P:positive regulation of MAPK cascade"/>
    <property type="evidence" value="ECO:0000314"/>
    <property type="project" value="RGD"/>
</dbReference>
<dbReference type="GO" id="GO:0001934">
    <property type="term" value="P:positive regulation of protein phosphorylation"/>
    <property type="evidence" value="ECO:0000250"/>
    <property type="project" value="UniProtKB"/>
</dbReference>
<dbReference type="GO" id="GO:0031398">
    <property type="term" value="P:positive regulation of protein ubiquitination"/>
    <property type="evidence" value="ECO:0000315"/>
    <property type="project" value="RGD"/>
</dbReference>
<dbReference type="GO" id="GO:0002092">
    <property type="term" value="P:positive regulation of receptor internalization"/>
    <property type="evidence" value="ECO:0000250"/>
    <property type="project" value="UniProtKB"/>
</dbReference>
<dbReference type="GO" id="GO:0035025">
    <property type="term" value="P:positive regulation of Rho protein signal transduction"/>
    <property type="evidence" value="ECO:0000266"/>
    <property type="project" value="RGD"/>
</dbReference>
<dbReference type="GO" id="GO:0045944">
    <property type="term" value="P:positive regulation of transcription by RNA polymerase II"/>
    <property type="evidence" value="ECO:0000314"/>
    <property type="project" value="UniProtKB"/>
</dbReference>
<dbReference type="GO" id="GO:0043161">
    <property type="term" value="P:proteasome-mediated ubiquitin-dependent protein catabolic process"/>
    <property type="evidence" value="ECO:0000266"/>
    <property type="project" value="RGD"/>
</dbReference>
<dbReference type="GO" id="GO:0015031">
    <property type="term" value="P:protein transport"/>
    <property type="evidence" value="ECO:0007669"/>
    <property type="project" value="UniProtKB-KW"/>
</dbReference>
<dbReference type="GO" id="GO:0016567">
    <property type="term" value="P:protein ubiquitination"/>
    <property type="evidence" value="ECO:0000266"/>
    <property type="project" value="RGD"/>
</dbReference>
<dbReference type="GO" id="GO:0042981">
    <property type="term" value="P:regulation of apoptotic process"/>
    <property type="evidence" value="ECO:0000266"/>
    <property type="project" value="RGD"/>
</dbReference>
<dbReference type="GO" id="GO:0006355">
    <property type="term" value="P:regulation of DNA-templated transcription"/>
    <property type="evidence" value="ECO:0000314"/>
    <property type="project" value="UniProtKB"/>
</dbReference>
<dbReference type="GO" id="GO:0008277">
    <property type="term" value="P:regulation of G protein-coupled receptor signaling pathway"/>
    <property type="evidence" value="ECO:0000314"/>
    <property type="project" value="RGD"/>
</dbReference>
<dbReference type="GO" id="GO:0032960">
    <property type="term" value="P:regulation of inositol trisphosphate biosynthetic process"/>
    <property type="evidence" value="ECO:0000315"/>
    <property type="project" value="RGD"/>
</dbReference>
<dbReference type="GO" id="GO:0006357">
    <property type="term" value="P:regulation of transcription by RNA polymerase II"/>
    <property type="evidence" value="ECO:0000266"/>
    <property type="project" value="RGD"/>
</dbReference>
<dbReference type="GO" id="GO:0043278">
    <property type="term" value="P:response to morphine"/>
    <property type="evidence" value="ECO:0000270"/>
    <property type="project" value="RGD"/>
</dbReference>
<dbReference type="GO" id="GO:0009410">
    <property type="term" value="P:response to xenobiotic stimulus"/>
    <property type="evidence" value="ECO:0000270"/>
    <property type="project" value="RGD"/>
</dbReference>
<dbReference type="GO" id="GO:0050975">
    <property type="term" value="P:sensory perception of touch"/>
    <property type="evidence" value="ECO:0000304"/>
    <property type="project" value="RGD"/>
</dbReference>
<dbReference type="GO" id="GO:0043149">
    <property type="term" value="P:stress fiber assembly"/>
    <property type="evidence" value="ECO:0000266"/>
    <property type="project" value="RGD"/>
</dbReference>
<dbReference type="GO" id="GO:0006511">
    <property type="term" value="P:ubiquitin-dependent protein catabolic process"/>
    <property type="evidence" value="ECO:0000250"/>
    <property type="project" value="UniProtKB"/>
</dbReference>
<dbReference type="FunFam" id="2.60.40.640:FF:000003">
    <property type="entry name" value="beta-arrestin-1 isoform X1"/>
    <property type="match status" value="1"/>
</dbReference>
<dbReference type="FunFam" id="2.60.40.840:FF:000001">
    <property type="entry name" value="beta-arrestin-1 isoform X1"/>
    <property type="match status" value="1"/>
</dbReference>
<dbReference type="Gene3D" id="2.60.40.640">
    <property type="match status" value="1"/>
</dbReference>
<dbReference type="Gene3D" id="2.60.40.840">
    <property type="match status" value="1"/>
</dbReference>
<dbReference type="InterPro" id="IPR000698">
    <property type="entry name" value="Arrestin"/>
</dbReference>
<dbReference type="InterPro" id="IPR014752">
    <property type="entry name" value="Arrestin-like_C"/>
</dbReference>
<dbReference type="InterPro" id="IPR011021">
    <property type="entry name" value="Arrestin-like_N"/>
</dbReference>
<dbReference type="InterPro" id="IPR011022">
    <property type="entry name" value="Arrestin_C-like"/>
</dbReference>
<dbReference type="InterPro" id="IPR017864">
    <property type="entry name" value="Arrestin_CS"/>
</dbReference>
<dbReference type="InterPro" id="IPR014753">
    <property type="entry name" value="Arrestin_N"/>
</dbReference>
<dbReference type="InterPro" id="IPR014756">
    <property type="entry name" value="Ig_E-set"/>
</dbReference>
<dbReference type="PANTHER" id="PTHR11792">
    <property type="entry name" value="ARRESTIN"/>
    <property type="match status" value="1"/>
</dbReference>
<dbReference type="PANTHER" id="PTHR11792:SF22">
    <property type="entry name" value="BETA-ARRESTIN-1"/>
    <property type="match status" value="1"/>
</dbReference>
<dbReference type="Pfam" id="PF02752">
    <property type="entry name" value="Arrestin_C"/>
    <property type="match status" value="1"/>
</dbReference>
<dbReference type="Pfam" id="PF00339">
    <property type="entry name" value="Arrestin_N"/>
    <property type="match status" value="1"/>
</dbReference>
<dbReference type="PRINTS" id="PR00309">
    <property type="entry name" value="ARRESTIN"/>
</dbReference>
<dbReference type="SMART" id="SM01017">
    <property type="entry name" value="Arrestin_C"/>
    <property type="match status" value="1"/>
</dbReference>
<dbReference type="SUPFAM" id="SSF81296">
    <property type="entry name" value="E set domains"/>
    <property type="match status" value="2"/>
</dbReference>
<dbReference type="PROSITE" id="PS00295">
    <property type="entry name" value="ARRESTINS"/>
    <property type="match status" value="1"/>
</dbReference>
<gene>
    <name evidence="28" type="primary">Arrb1</name>
</gene>
<proteinExistence type="evidence at protein level"/>
<keyword id="KW-0002">3D-structure</keyword>
<keyword id="KW-1003">Cell membrane</keyword>
<keyword id="KW-0966">Cell projection</keyword>
<keyword id="KW-0168">Coated pit</keyword>
<keyword id="KW-0963">Cytoplasm</keyword>
<keyword id="KW-0968">Cytoplasmic vesicle</keyword>
<keyword id="KW-0472">Membrane</keyword>
<keyword id="KW-0539">Nucleus</keyword>
<keyword id="KW-0597">Phosphoprotein</keyword>
<keyword id="KW-0653">Protein transport</keyword>
<keyword id="KW-1185">Reference proteome</keyword>
<keyword id="KW-0734">Signal transduction inhibitor</keyword>
<keyword id="KW-0804">Transcription</keyword>
<keyword id="KW-0805">Transcription regulation</keyword>
<keyword id="KW-0813">Transport</keyword>
<keyword id="KW-0832">Ubl conjugation</keyword>